<reference key="1">
    <citation type="journal article" date="2001" name="Nature">
        <title>Complete genome sequence of Salmonella enterica serovar Typhimurium LT2.</title>
        <authorList>
            <person name="McClelland M."/>
            <person name="Sanderson K.E."/>
            <person name="Spieth J."/>
            <person name="Clifton S.W."/>
            <person name="Latreille P."/>
            <person name="Courtney L."/>
            <person name="Porwollik S."/>
            <person name="Ali J."/>
            <person name="Dante M."/>
            <person name="Du F."/>
            <person name="Hou S."/>
            <person name="Layman D."/>
            <person name="Leonard S."/>
            <person name="Nguyen C."/>
            <person name="Scott K."/>
            <person name="Holmes A."/>
            <person name="Grewal N."/>
            <person name="Mulvaney E."/>
            <person name="Ryan E."/>
            <person name="Sun H."/>
            <person name="Florea L."/>
            <person name="Miller W."/>
            <person name="Stoneking T."/>
            <person name="Nhan M."/>
            <person name="Waterston R."/>
            <person name="Wilson R.K."/>
        </authorList>
    </citation>
    <scope>NUCLEOTIDE SEQUENCE [LARGE SCALE GENOMIC DNA]</scope>
    <source>
        <strain>LT2 / SGSC1412 / ATCC 700720</strain>
    </source>
</reference>
<protein>
    <recommendedName>
        <fullName evidence="1">Imidazolonepropionase</fullName>
        <ecNumber evidence="1">3.5.2.7</ecNumber>
    </recommendedName>
    <alternativeName>
        <fullName evidence="1">Imidazolone-5-propionate hydrolase</fullName>
    </alternativeName>
</protein>
<feature type="chain" id="PRO_0000160957" description="Imidazolonepropionase">
    <location>
        <begin position="1"/>
        <end position="407"/>
    </location>
</feature>
<feature type="binding site" evidence="1">
    <location>
        <position position="74"/>
    </location>
    <ligand>
        <name>Fe(3+)</name>
        <dbReference type="ChEBI" id="CHEBI:29034"/>
    </ligand>
</feature>
<feature type="binding site" evidence="1">
    <location>
        <position position="74"/>
    </location>
    <ligand>
        <name>Zn(2+)</name>
        <dbReference type="ChEBI" id="CHEBI:29105"/>
    </ligand>
</feature>
<feature type="binding site" evidence="1">
    <location>
        <position position="76"/>
    </location>
    <ligand>
        <name>Fe(3+)</name>
        <dbReference type="ChEBI" id="CHEBI:29034"/>
    </ligand>
</feature>
<feature type="binding site" evidence="1">
    <location>
        <position position="76"/>
    </location>
    <ligand>
        <name>Zn(2+)</name>
        <dbReference type="ChEBI" id="CHEBI:29105"/>
    </ligand>
</feature>
<feature type="binding site" evidence="1">
    <location>
        <position position="83"/>
    </location>
    <ligand>
        <name>4-imidazolone-5-propanoate</name>
        <dbReference type="ChEBI" id="CHEBI:77893"/>
    </ligand>
</feature>
<feature type="binding site" evidence="1">
    <location>
        <position position="146"/>
    </location>
    <ligand>
        <name>4-imidazolone-5-propanoate</name>
        <dbReference type="ChEBI" id="CHEBI:77893"/>
    </ligand>
</feature>
<feature type="binding site" evidence="1">
    <location>
        <position position="146"/>
    </location>
    <ligand>
        <name>N-formimidoyl-L-glutamate</name>
        <dbReference type="ChEBI" id="CHEBI:58928"/>
    </ligand>
</feature>
<feature type="binding site" evidence="1">
    <location>
        <position position="179"/>
    </location>
    <ligand>
        <name>4-imidazolone-5-propanoate</name>
        <dbReference type="ChEBI" id="CHEBI:77893"/>
    </ligand>
</feature>
<feature type="binding site" evidence="1">
    <location>
        <position position="244"/>
    </location>
    <ligand>
        <name>Fe(3+)</name>
        <dbReference type="ChEBI" id="CHEBI:29034"/>
    </ligand>
</feature>
<feature type="binding site" evidence="1">
    <location>
        <position position="244"/>
    </location>
    <ligand>
        <name>Zn(2+)</name>
        <dbReference type="ChEBI" id="CHEBI:29105"/>
    </ligand>
</feature>
<feature type="binding site" evidence="1">
    <location>
        <position position="247"/>
    </location>
    <ligand>
        <name>4-imidazolone-5-propanoate</name>
        <dbReference type="ChEBI" id="CHEBI:77893"/>
    </ligand>
</feature>
<feature type="binding site" evidence="1">
    <location>
        <position position="319"/>
    </location>
    <ligand>
        <name>Fe(3+)</name>
        <dbReference type="ChEBI" id="CHEBI:29034"/>
    </ligand>
</feature>
<feature type="binding site" evidence="1">
    <location>
        <position position="319"/>
    </location>
    <ligand>
        <name>Zn(2+)</name>
        <dbReference type="ChEBI" id="CHEBI:29105"/>
    </ligand>
</feature>
<feature type="binding site" evidence="1">
    <location>
        <position position="321"/>
    </location>
    <ligand>
        <name>N-formimidoyl-L-glutamate</name>
        <dbReference type="ChEBI" id="CHEBI:58928"/>
    </ligand>
</feature>
<feature type="binding site" evidence="1">
    <location>
        <position position="323"/>
    </location>
    <ligand>
        <name>N-formimidoyl-L-glutamate</name>
        <dbReference type="ChEBI" id="CHEBI:58928"/>
    </ligand>
</feature>
<feature type="binding site" evidence="1">
    <location>
        <position position="324"/>
    </location>
    <ligand>
        <name>4-imidazolone-5-propanoate</name>
        <dbReference type="ChEBI" id="CHEBI:77893"/>
    </ligand>
</feature>
<keyword id="KW-0963">Cytoplasm</keyword>
<keyword id="KW-0369">Histidine metabolism</keyword>
<keyword id="KW-0378">Hydrolase</keyword>
<keyword id="KW-0408">Iron</keyword>
<keyword id="KW-0479">Metal-binding</keyword>
<keyword id="KW-1185">Reference proteome</keyword>
<keyword id="KW-0862">Zinc</keyword>
<accession>Q8ZQR2</accession>
<organism>
    <name type="scientific">Salmonella typhimurium (strain LT2 / SGSC1412 / ATCC 700720)</name>
    <dbReference type="NCBI Taxonomy" id="99287"/>
    <lineage>
        <taxon>Bacteria</taxon>
        <taxon>Pseudomonadati</taxon>
        <taxon>Pseudomonadota</taxon>
        <taxon>Gammaproteobacteria</taxon>
        <taxon>Enterobacterales</taxon>
        <taxon>Enterobacteriaceae</taxon>
        <taxon>Salmonella</taxon>
    </lineage>
</organism>
<comment type="function">
    <text evidence="1">Catalyzes the hydrolytic cleavage of the carbon-nitrogen bond in imidazolone-5-propanoate to yield N-formimidoyl-L-glutamate. It is the third step in the universal histidine degradation pathway.</text>
</comment>
<comment type="catalytic activity">
    <reaction evidence="1">
        <text>4-imidazolone-5-propanoate + H2O = N-formimidoyl-L-glutamate</text>
        <dbReference type="Rhea" id="RHEA:23660"/>
        <dbReference type="ChEBI" id="CHEBI:15377"/>
        <dbReference type="ChEBI" id="CHEBI:58928"/>
        <dbReference type="ChEBI" id="CHEBI:77893"/>
        <dbReference type="EC" id="3.5.2.7"/>
    </reaction>
</comment>
<comment type="cofactor">
    <cofactor evidence="1">
        <name>Zn(2+)</name>
        <dbReference type="ChEBI" id="CHEBI:29105"/>
    </cofactor>
    <cofactor evidence="1">
        <name>Fe(3+)</name>
        <dbReference type="ChEBI" id="CHEBI:29034"/>
    </cofactor>
    <text evidence="1">Binds 1 zinc or iron ion per subunit.</text>
</comment>
<comment type="pathway">
    <text evidence="1">Amino-acid degradation; L-histidine degradation into L-glutamate; N-formimidoyl-L-glutamate from L-histidine: step 3/3.</text>
</comment>
<comment type="subcellular location">
    <subcellularLocation>
        <location evidence="1">Cytoplasm</location>
    </subcellularLocation>
</comment>
<comment type="similarity">
    <text evidence="1">Belongs to the metallo-dependent hydrolases superfamily. HutI family.</text>
</comment>
<name>HUTI_SALTY</name>
<gene>
    <name evidence="1" type="primary">hutI</name>
    <name type="ordered locus">STM0787</name>
</gene>
<evidence type="ECO:0000255" key="1">
    <source>
        <dbReference type="HAMAP-Rule" id="MF_00372"/>
    </source>
</evidence>
<sequence>MRQLLPGDTVWRNIRLATMDPQQQALYGLVDNQALIVREGHICDIVPETQLPVSGDNIHDMQGRLVTPGLIDCHTHLVFAGNRAAEWEQRLNGASYQHISAQGGGINATVSATRACAEETLYLLARERMMRLASEGVTLLEIKSGYGLELATEEKLLRVAAKLAAENAIDISPTLLAAHATPAEYRDDPDGYITLVCETMIPQLWQKGLFDAVDLFCESVGFNVAQSERVLQTAKALGIPVKGHVEQLSLLGGAQLVSRYQGLSADHIEYLDEVGVAAMRDGGTVGVLLPGAFYFLRETQRPPVELLRRYQVPVAVASDFNPGTSPFCSLHLAMNMACVQFGLTPEEAWAGVTRHAARALGRQATHGQIRAGYRADFVVWDAEQPVEIVYEPGRNPLYQRVYRGKIS</sequence>
<dbReference type="EC" id="3.5.2.7" evidence="1"/>
<dbReference type="EMBL" id="AE006468">
    <property type="protein sequence ID" value="AAL19725.1"/>
    <property type="molecule type" value="Genomic_DNA"/>
</dbReference>
<dbReference type="RefSeq" id="NP_459766.1">
    <property type="nucleotide sequence ID" value="NC_003197.2"/>
</dbReference>
<dbReference type="RefSeq" id="WP_001249472.1">
    <property type="nucleotide sequence ID" value="NC_003197.2"/>
</dbReference>
<dbReference type="SMR" id="Q8ZQR2"/>
<dbReference type="STRING" id="99287.STM0787"/>
<dbReference type="PaxDb" id="99287-STM0787"/>
<dbReference type="GeneID" id="1252307"/>
<dbReference type="KEGG" id="stm:STM0787"/>
<dbReference type="PATRIC" id="fig|99287.12.peg.820"/>
<dbReference type="HOGENOM" id="CLU_041647_0_0_6"/>
<dbReference type="OMA" id="MVYEPGR"/>
<dbReference type="PhylomeDB" id="Q8ZQR2"/>
<dbReference type="BioCyc" id="SENT99287:STM0787-MONOMER"/>
<dbReference type="UniPathway" id="UPA00379">
    <property type="reaction ID" value="UER00551"/>
</dbReference>
<dbReference type="Proteomes" id="UP000001014">
    <property type="component" value="Chromosome"/>
</dbReference>
<dbReference type="GO" id="GO:0005737">
    <property type="term" value="C:cytoplasm"/>
    <property type="evidence" value="ECO:0007669"/>
    <property type="project" value="UniProtKB-SubCell"/>
</dbReference>
<dbReference type="GO" id="GO:0050480">
    <property type="term" value="F:imidazolonepropionase activity"/>
    <property type="evidence" value="ECO:0000318"/>
    <property type="project" value="GO_Central"/>
</dbReference>
<dbReference type="GO" id="GO:0005506">
    <property type="term" value="F:iron ion binding"/>
    <property type="evidence" value="ECO:0007669"/>
    <property type="project" value="UniProtKB-UniRule"/>
</dbReference>
<dbReference type="GO" id="GO:0008270">
    <property type="term" value="F:zinc ion binding"/>
    <property type="evidence" value="ECO:0007669"/>
    <property type="project" value="UniProtKB-UniRule"/>
</dbReference>
<dbReference type="GO" id="GO:0006548">
    <property type="term" value="P:L-histidine catabolic process"/>
    <property type="evidence" value="ECO:0000318"/>
    <property type="project" value="GO_Central"/>
</dbReference>
<dbReference type="GO" id="GO:0019556">
    <property type="term" value="P:L-histidine catabolic process to glutamate and formamide"/>
    <property type="evidence" value="ECO:0007669"/>
    <property type="project" value="UniProtKB-UniPathway"/>
</dbReference>
<dbReference type="GO" id="GO:0019557">
    <property type="term" value="P:L-histidine catabolic process to glutamate and formate"/>
    <property type="evidence" value="ECO:0007669"/>
    <property type="project" value="UniProtKB-UniPathway"/>
</dbReference>
<dbReference type="CDD" id="cd01296">
    <property type="entry name" value="Imidazolone-5PH"/>
    <property type="match status" value="1"/>
</dbReference>
<dbReference type="FunFam" id="3.20.20.140:FF:000007">
    <property type="entry name" value="Imidazolonepropionase"/>
    <property type="match status" value="1"/>
</dbReference>
<dbReference type="Gene3D" id="3.20.20.140">
    <property type="entry name" value="Metal-dependent hydrolases"/>
    <property type="match status" value="1"/>
</dbReference>
<dbReference type="Gene3D" id="2.30.40.10">
    <property type="entry name" value="Urease, subunit C, domain 1"/>
    <property type="match status" value="1"/>
</dbReference>
<dbReference type="HAMAP" id="MF_00372">
    <property type="entry name" value="HutI"/>
    <property type="match status" value="1"/>
</dbReference>
<dbReference type="InterPro" id="IPR006680">
    <property type="entry name" value="Amidohydro-rel"/>
</dbReference>
<dbReference type="InterPro" id="IPR005920">
    <property type="entry name" value="HutI"/>
</dbReference>
<dbReference type="InterPro" id="IPR011059">
    <property type="entry name" value="Metal-dep_hydrolase_composite"/>
</dbReference>
<dbReference type="InterPro" id="IPR032466">
    <property type="entry name" value="Metal_Hydrolase"/>
</dbReference>
<dbReference type="NCBIfam" id="TIGR01224">
    <property type="entry name" value="hutI"/>
    <property type="match status" value="1"/>
</dbReference>
<dbReference type="PANTHER" id="PTHR42752">
    <property type="entry name" value="IMIDAZOLONEPROPIONASE"/>
    <property type="match status" value="1"/>
</dbReference>
<dbReference type="PANTHER" id="PTHR42752:SF1">
    <property type="entry name" value="IMIDAZOLONEPROPIONASE-RELATED"/>
    <property type="match status" value="1"/>
</dbReference>
<dbReference type="Pfam" id="PF01979">
    <property type="entry name" value="Amidohydro_1"/>
    <property type="match status" value="1"/>
</dbReference>
<dbReference type="SUPFAM" id="SSF51338">
    <property type="entry name" value="Composite domain of metallo-dependent hydrolases"/>
    <property type="match status" value="1"/>
</dbReference>
<dbReference type="SUPFAM" id="SSF51556">
    <property type="entry name" value="Metallo-dependent hydrolases"/>
    <property type="match status" value="1"/>
</dbReference>
<proteinExistence type="inferred from homology"/>